<reference key="1">
    <citation type="journal article" date="2005" name="Genome Res.">
        <title>Sequence, annotation, and analysis of synteny between rice chromosome 3 and diverged grass species.</title>
        <authorList>
            <consortium name="The rice chromosome 3 sequencing consortium"/>
            <person name="Buell C.R."/>
            <person name="Yuan Q."/>
            <person name="Ouyang S."/>
            <person name="Liu J."/>
            <person name="Zhu W."/>
            <person name="Wang A."/>
            <person name="Maiti R."/>
            <person name="Haas B."/>
            <person name="Wortman J."/>
            <person name="Pertea M."/>
            <person name="Jones K.M."/>
            <person name="Kim M."/>
            <person name="Overton L."/>
            <person name="Tsitrin T."/>
            <person name="Fadrosh D."/>
            <person name="Bera J."/>
            <person name="Weaver B."/>
            <person name="Jin S."/>
            <person name="Johri S."/>
            <person name="Reardon M."/>
            <person name="Webb K."/>
            <person name="Hill J."/>
            <person name="Moffat K."/>
            <person name="Tallon L."/>
            <person name="Van Aken S."/>
            <person name="Lewis M."/>
            <person name="Utterback T."/>
            <person name="Feldblyum T."/>
            <person name="Zismann V."/>
            <person name="Iobst S."/>
            <person name="Hsiao J."/>
            <person name="de Vazeille A.R."/>
            <person name="Salzberg S.L."/>
            <person name="White O."/>
            <person name="Fraser C.M."/>
            <person name="Yu Y."/>
            <person name="Kim H."/>
            <person name="Rambo T."/>
            <person name="Currie J."/>
            <person name="Collura K."/>
            <person name="Kernodle-Thompson S."/>
            <person name="Wei F."/>
            <person name="Kudrna K."/>
            <person name="Ammiraju J.S.S."/>
            <person name="Luo M."/>
            <person name="Goicoechea J.L."/>
            <person name="Wing R.A."/>
            <person name="Henry D."/>
            <person name="Oates R."/>
            <person name="Palmer M."/>
            <person name="Pries G."/>
            <person name="Saski C."/>
            <person name="Simmons J."/>
            <person name="Soderlund C."/>
            <person name="Nelson W."/>
            <person name="de la Bastide M."/>
            <person name="Spiegel L."/>
            <person name="Nascimento L."/>
            <person name="Huang E."/>
            <person name="Preston R."/>
            <person name="Zutavern T."/>
            <person name="Palmer L."/>
            <person name="O'Shaughnessy A."/>
            <person name="Dike S."/>
            <person name="McCombie W.R."/>
            <person name="Minx P."/>
            <person name="Cordum H."/>
            <person name="Wilson R."/>
            <person name="Jin W."/>
            <person name="Lee H.R."/>
            <person name="Jiang J."/>
            <person name="Jackson S."/>
        </authorList>
    </citation>
    <scope>NUCLEOTIDE SEQUENCE [LARGE SCALE GENOMIC DNA]</scope>
    <source>
        <strain>cv. Nipponbare</strain>
    </source>
</reference>
<reference key="2">
    <citation type="journal article" date="2005" name="Nature">
        <title>The map-based sequence of the rice genome.</title>
        <authorList>
            <consortium name="International rice genome sequencing project (IRGSP)"/>
        </authorList>
    </citation>
    <scope>NUCLEOTIDE SEQUENCE [LARGE SCALE GENOMIC DNA]</scope>
    <source>
        <strain>cv. Nipponbare</strain>
    </source>
</reference>
<reference key="3">
    <citation type="journal article" date="2008" name="Nucleic Acids Res.">
        <title>The rice annotation project database (RAP-DB): 2008 update.</title>
        <authorList>
            <consortium name="The rice annotation project (RAP)"/>
        </authorList>
    </citation>
    <scope>GENOME REANNOTATION</scope>
    <source>
        <strain>cv. Nipponbare</strain>
    </source>
</reference>
<reference key="4">
    <citation type="journal article" date="2013" name="Rice">
        <title>Improvement of the Oryza sativa Nipponbare reference genome using next generation sequence and optical map data.</title>
        <authorList>
            <person name="Kawahara Y."/>
            <person name="de la Bastide M."/>
            <person name="Hamilton J.P."/>
            <person name="Kanamori H."/>
            <person name="McCombie W.R."/>
            <person name="Ouyang S."/>
            <person name="Schwartz D.C."/>
            <person name="Tanaka T."/>
            <person name="Wu J."/>
            <person name="Zhou S."/>
            <person name="Childs K.L."/>
            <person name="Davidson R.M."/>
            <person name="Lin H."/>
            <person name="Quesada-Ocampo L."/>
            <person name="Vaillancourt B."/>
            <person name="Sakai H."/>
            <person name="Lee S.S."/>
            <person name="Kim J."/>
            <person name="Numa H."/>
            <person name="Itoh T."/>
            <person name="Buell C.R."/>
            <person name="Matsumoto T."/>
        </authorList>
    </citation>
    <scope>GENOME REANNOTATION</scope>
    <source>
        <strain>cv. Nipponbare</strain>
    </source>
</reference>
<reference key="5">
    <citation type="journal article" date="2005" name="PLoS Biol.">
        <title>The genomes of Oryza sativa: a history of duplications.</title>
        <authorList>
            <person name="Yu J."/>
            <person name="Wang J."/>
            <person name="Lin W."/>
            <person name="Li S."/>
            <person name="Li H."/>
            <person name="Zhou J."/>
            <person name="Ni P."/>
            <person name="Dong W."/>
            <person name="Hu S."/>
            <person name="Zeng C."/>
            <person name="Zhang J."/>
            <person name="Zhang Y."/>
            <person name="Li R."/>
            <person name="Xu Z."/>
            <person name="Li S."/>
            <person name="Li X."/>
            <person name="Zheng H."/>
            <person name="Cong L."/>
            <person name="Lin L."/>
            <person name="Yin J."/>
            <person name="Geng J."/>
            <person name="Li G."/>
            <person name="Shi J."/>
            <person name="Liu J."/>
            <person name="Lv H."/>
            <person name="Li J."/>
            <person name="Wang J."/>
            <person name="Deng Y."/>
            <person name="Ran L."/>
            <person name="Shi X."/>
            <person name="Wang X."/>
            <person name="Wu Q."/>
            <person name="Li C."/>
            <person name="Ren X."/>
            <person name="Wang J."/>
            <person name="Wang X."/>
            <person name="Li D."/>
            <person name="Liu D."/>
            <person name="Zhang X."/>
            <person name="Ji Z."/>
            <person name="Zhao W."/>
            <person name="Sun Y."/>
            <person name="Zhang Z."/>
            <person name="Bao J."/>
            <person name="Han Y."/>
            <person name="Dong L."/>
            <person name="Ji J."/>
            <person name="Chen P."/>
            <person name="Wu S."/>
            <person name="Liu J."/>
            <person name="Xiao Y."/>
            <person name="Bu D."/>
            <person name="Tan J."/>
            <person name="Yang L."/>
            <person name="Ye C."/>
            <person name="Zhang J."/>
            <person name="Xu J."/>
            <person name="Zhou Y."/>
            <person name="Yu Y."/>
            <person name="Zhang B."/>
            <person name="Zhuang S."/>
            <person name="Wei H."/>
            <person name="Liu B."/>
            <person name="Lei M."/>
            <person name="Yu H."/>
            <person name="Li Y."/>
            <person name="Xu H."/>
            <person name="Wei S."/>
            <person name="He X."/>
            <person name="Fang L."/>
            <person name="Zhang Z."/>
            <person name="Zhang Y."/>
            <person name="Huang X."/>
            <person name="Su Z."/>
            <person name="Tong W."/>
            <person name="Li J."/>
            <person name="Tong Z."/>
            <person name="Li S."/>
            <person name="Ye J."/>
            <person name="Wang L."/>
            <person name="Fang L."/>
            <person name="Lei T."/>
            <person name="Chen C.-S."/>
            <person name="Chen H.-C."/>
            <person name="Xu Z."/>
            <person name="Li H."/>
            <person name="Huang H."/>
            <person name="Zhang F."/>
            <person name="Xu H."/>
            <person name="Li N."/>
            <person name="Zhao C."/>
            <person name="Li S."/>
            <person name="Dong L."/>
            <person name="Huang Y."/>
            <person name="Li L."/>
            <person name="Xi Y."/>
            <person name="Qi Q."/>
            <person name="Li W."/>
            <person name="Zhang B."/>
            <person name="Hu W."/>
            <person name="Zhang Y."/>
            <person name="Tian X."/>
            <person name="Jiao Y."/>
            <person name="Liang X."/>
            <person name="Jin J."/>
            <person name="Gao L."/>
            <person name="Zheng W."/>
            <person name="Hao B."/>
            <person name="Liu S.-M."/>
            <person name="Wang W."/>
            <person name="Yuan L."/>
            <person name="Cao M."/>
            <person name="McDermott J."/>
            <person name="Samudrala R."/>
            <person name="Wang J."/>
            <person name="Wong G.K.-S."/>
            <person name="Yang H."/>
        </authorList>
    </citation>
    <scope>NUCLEOTIDE SEQUENCE [LARGE SCALE GENOMIC DNA]</scope>
    <source>
        <strain>cv. Nipponbare</strain>
    </source>
</reference>
<reference key="6">
    <citation type="journal article" date="2003" name="Science">
        <title>Collection, mapping, and annotation of over 28,000 cDNA clones from japonica rice.</title>
        <authorList>
            <consortium name="The rice full-length cDNA consortium"/>
        </authorList>
    </citation>
    <scope>NUCLEOTIDE SEQUENCE [LARGE SCALE MRNA]</scope>
    <source>
        <strain>cv. Nipponbare</strain>
    </source>
</reference>
<protein>
    <recommendedName>
        <fullName>U2 small nuclear ribonucleoprotein B''</fullName>
        <shortName>U2 snRNP B''</shortName>
    </recommendedName>
</protein>
<comment type="function">
    <text evidence="1">Involved in nuclear pre-mRNA splicing.</text>
</comment>
<comment type="subunit">
    <text evidence="1">Component of the spliceosome where it is associated with snRNP U2.</text>
</comment>
<comment type="subcellular location">
    <subcellularLocation>
        <location evidence="2">Nucleus</location>
        <location evidence="2">Cajal body</location>
    </subcellularLocation>
    <subcellularLocation>
        <location evidence="2">Nucleus</location>
        <location evidence="2">Nucleoplasm</location>
    </subcellularLocation>
    <subcellularLocation>
        <location evidence="2">Cytoplasm</location>
    </subcellularLocation>
    <text evidence="2">Present in coiled bodies and an interchromatin network. Redistributed throughout the cytoplasm upon entry into mitosis. Also detected in central nucleolar vacuole.</text>
</comment>
<comment type="similarity">
    <text evidence="5">Belongs to the RRM U1 A/B'' family.</text>
</comment>
<comment type="sequence caution" evidence="5">
    <conflict type="erroneous gene model prediction">
        <sequence resource="EMBL-CDS" id="ABF95465"/>
    </conflict>
</comment>
<accession>Q10MR0</accession>
<accession>A0A0P0VX32</accession>
<accession>Q10MR1</accession>
<proteinExistence type="evidence at transcript level"/>
<evidence type="ECO:0000250" key="1"/>
<evidence type="ECO:0000250" key="2">
    <source>
        <dbReference type="UniProtKB" id="O22922"/>
    </source>
</evidence>
<evidence type="ECO:0000255" key="3">
    <source>
        <dbReference type="PROSITE-ProRule" id="PRU00176"/>
    </source>
</evidence>
<evidence type="ECO:0000256" key="4">
    <source>
        <dbReference type="SAM" id="MobiDB-lite"/>
    </source>
</evidence>
<evidence type="ECO:0000305" key="5"/>
<sequence length="232" mass="26101">MLSGDIPPNQTVYLRNLNEKVKKEELKRSLYALCSQYGRILDVVALKTPKLRGQAWVVFSEITAATNAFRGLQEFDFYGKRMRVQYAKTRSDCLATEDGSTAPKEKRKKQEEKAAEKKRRAEEAQQSGPNAAAQSNGTGYQASRLGKTSQEPPAPPNNILFIQNLPAETTSMMLQILFQQYPGFREVRMIEAKPGIAFVEYEDDSQSMVAMQALQGFKITPYNPMAISYAKK</sequence>
<feature type="chain" id="PRO_0000416931" description="U2 small nuclear ribonucleoprotein B''">
    <location>
        <begin position="1"/>
        <end position="232"/>
    </location>
</feature>
<feature type="domain" description="RRM 1" evidence="3">
    <location>
        <begin position="10"/>
        <end position="89"/>
    </location>
</feature>
<feature type="domain" description="RRM 2" evidence="3">
    <location>
        <begin position="158"/>
        <end position="232"/>
    </location>
</feature>
<feature type="region of interest" description="Disordered" evidence="4">
    <location>
        <begin position="90"/>
        <end position="159"/>
    </location>
</feature>
<feature type="compositionally biased region" description="Basic and acidic residues" evidence="4">
    <location>
        <begin position="108"/>
        <end position="123"/>
    </location>
</feature>
<feature type="compositionally biased region" description="Polar residues" evidence="4">
    <location>
        <begin position="127"/>
        <end position="151"/>
    </location>
</feature>
<gene>
    <name type="ordered locus">Os03g0298800</name>
    <name type="ordered locus">LOC_Os03g18720</name>
    <name type="ORF">OsJ_10509</name>
</gene>
<keyword id="KW-0963">Cytoplasm</keyword>
<keyword id="KW-0507">mRNA processing</keyword>
<keyword id="KW-0508">mRNA splicing</keyword>
<keyword id="KW-0539">Nucleus</keyword>
<keyword id="KW-1185">Reference proteome</keyword>
<keyword id="KW-0677">Repeat</keyword>
<keyword id="KW-0687">Ribonucleoprotein</keyword>
<keyword id="KW-0694">RNA-binding</keyword>
<keyword id="KW-0747">Spliceosome</keyword>
<name>RU2B_ORYSJ</name>
<organism>
    <name type="scientific">Oryza sativa subsp. japonica</name>
    <name type="common">Rice</name>
    <dbReference type="NCBI Taxonomy" id="39947"/>
    <lineage>
        <taxon>Eukaryota</taxon>
        <taxon>Viridiplantae</taxon>
        <taxon>Streptophyta</taxon>
        <taxon>Embryophyta</taxon>
        <taxon>Tracheophyta</taxon>
        <taxon>Spermatophyta</taxon>
        <taxon>Magnoliopsida</taxon>
        <taxon>Liliopsida</taxon>
        <taxon>Poales</taxon>
        <taxon>Poaceae</taxon>
        <taxon>BOP clade</taxon>
        <taxon>Oryzoideae</taxon>
        <taxon>Oryzeae</taxon>
        <taxon>Oryzinae</taxon>
        <taxon>Oryza</taxon>
        <taxon>Oryza sativa</taxon>
    </lineage>
</organism>
<dbReference type="EMBL" id="DP000009">
    <property type="protein sequence ID" value="ABF95464.1"/>
    <property type="molecule type" value="Genomic_DNA"/>
</dbReference>
<dbReference type="EMBL" id="DP000009">
    <property type="protein sequence ID" value="ABF95465.1"/>
    <property type="status" value="ALT_SEQ"/>
    <property type="molecule type" value="Genomic_DNA"/>
</dbReference>
<dbReference type="EMBL" id="AP008209">
    <property type="protein sequence ID" value="BAF11760.1"/>
    <property type="molecule type" value="Genomic_DNA"/>
</dbReference>
<dbReference type="EMBL" id="AP014959">
    <property type="protein sequence ID" value="BAS83746.1"/>
    <property type="molecule type" value="Genomic_DNA"/>
</dbReference>
<dbReference type="EMBL" id="CM000140">
    <property type="protein sequence ID" value="EEE58889.1"/>
    <property type="molecule type" value="Genomic_DNA"/>
</dbReference>
<dbReference type="EMBL" id="AK103337">
    <property type="protein sequence ID" value="BAG96027.1"/>
    <property type="molecule type" value="mRNA"/>
</dbReference>
<dbReference type="RefSeq" id="XP_015628121.1">
    <property type="nucleotide sequence ID" value="XM_015772635.1"/>
</dbReference>
<dbReference type="RefSeq" id="XP_015628122.1">
    <property type="nucleotide sequence ID" value="XM_015772636.1"/>
</dbReference>
<dbReference type="SMR" id="Q10MR0"/>
<dbReference type="FunCoup" id="Q10MR0">
    <property type="interactions" value="3130"/>
</dbReference>
<dbReference type="STRING" id="39947.Q10MR0"/>
<dbReference type="PaxDb" id="39947-Q10MR0"/>
<dbReference type="EnsemblPlants" id="Os03t0298800-01">
    <property type="protein sequence ID" value="Os03t0298800-01"/>
    <property type="gene ID" value="Os03g0298800"/>
</dbReference>
<dbReference type="Gramene" id="Os03t0298800-01">
    <property type="protein sequence ID" value="Os03t0298800-01"/>
    <property type="gene ID" value="Os03g0298800"/>
</dbReference>
<dbReference type="KEGG" id="dosa:Os03g0298800"/>
<dbReference type="eggNOG" id="KOG4206">
    <property type="taxonomic scope" value="Eukaryota"/>
</dbReference>
<dbReference type="HOGENOM" id="CLU_041869_1_1_1"/>
<dbReference type="InParanoid" id="Q10MR0"/>
<dbReference type="OMA" id="VRMIPTK"/>
<dbReference type="OrthoDB" id="277802at2759"/>
<dbReference type="Proteomes" id="UP000000763">
    <property type="component" value="Chromosome 3"/>
</dbReference>
<dbReference type="Proteomes" id="UP000007752">
    <property type="component" value="Chromosome 3"/>
</dbReference>
<dbReference type="Proteomes" id="UP000059680">
    <property type="component" value="Chromosome 3"/>
</dbReference>
<dbReference type="GO" id="GO:0015030">
    <property type="term" value="C:Cajal body"/>
    <property type="evidence" value="ECO:0000250"/>
    <property type="project" value="UniProtKB"/>
</dbReference>
<dbReference type="GO" id="GO:0005737">
    <property type="term" value="C:cytoplasm"/>
    <property type="evidence" value="ECO:0007669"/>
    <property type="project" value="UniProtKB-SubCell"/>
</dbReference>
<dbReference type="GO" id="GO:0005654">
    <property type="term" value="C:nucleoplasm"/>
    <property type="evidence" value="ECO:0000250"/>
    <property type="project" value="UniProtKB"/>
</dbReference>
<dbReference type="GO" id="GO:0005681">
    <property type="term" value="C:spliceosomal complex"/>
    <property type="evidence" value="ECO:0007669"/>
    <property type="project" value="UniProtKB-KW"/>
</dbReference>
<dbReference type="GO" id="GO:0005686">
    <property type="term" value="C:U2 snRNP"/>
    <property type="evidence" value="ECO:0000250"/>
    <property type="project" value="UniProtKB"/>
</dbReference>
<dbReference type="GO" id="GO:0003723">
    <property type="term" value="F:RNA binding"/>
    <property type="evidence" value="ECO:0007669"/>
    <property type="project" value="UniProtKB-KW"/>
</dbReference>
<dbReference type="GO" id="GO:0000398">
    <property type="term" value="P:mRNA splicing, via spliceosome"/>
    <property type="evidence" value="ECO:0000318"/>
    <property type="project" value="GO_Central"/>
</dbReference>
<dbReference type="CDD" id="cd12246">
    <property type="entry name" value="RRM1_U1A_like"/>
    <property type="match status" value="1"/>
</dbReference>
<dbReference type="CDD" id="cd12247">
    <property type="entry name" value="RRM2_U1A_like"/>
    <property type="match status" value="1"/>
</dbReference>
<dbReference type="FunFam" id="3.30.70.330:FF:000039">
    <property type="entry name" value="U1 small nuclear ribonucleoprotein A"/>
    <property type="match status" value="1"/>
</dbReference>
<dbReference type="FunFam" id="3.30.70.330:FF:000029">
    <property type="entry name" value="U2 small nuclear ribonucleoprotein B"/>
    <property type="match status" value="1"/>
</dbReference>
<dbReference type="Gene3D" id="3.30.70.330">
    <property type="match status" value="2"/>
</dbReference>
<dbReference type="InterPro" id="IPR012677">
    <property type="entry name" value="Nucleotide-bd_a/b_plait_sf"/>
</dbReference>
<dbReference type="InterPro" id="IPR035979">
    <property type="entry name" value="RBD_domain_sf"/>
</dbReference>
<dbReference type="InterPro" id="IPR000504">
    <property type="entry name" value="RRM_dom"/>
</dbReference>
<dbReference type="PANTHER" id="PTHR10501">
    <property type="entry name" value="U1 SMALL NUCLEAR RIBONUCLEOPROTEIN A/U2 SMALL NUCLEAR RIBONUCLEOPROTEIN B"/>
    <property type="match status" value="1"/>
</dbReference>
<dbReference type="Pfam" id="PF00076">
    <property type="entry name" value="RRM_1"/>
    <property type="match status" value="2"/>
</dbReference>
<dbReference type="SMART" id="SM00360">
    <property type="entry name" value="RRM"/>
    <property type="match status" value="2"/>
</dbReference>
<dbReference type="SUPFAM" id="SSF54928">
    <property type="entry name" value="RNA-binding domain, RBD"/>
    <property type="match status" value="1"/>
</dbReference>
<dbReference type="PROSITE" id="PS50102">
    <property type="entry name" value="RRM"/>
    <property type="match status" value="2"/>
</dbReference>